<accession>Q08900</accession>
<accession>A0A1S0T0B4</accession>
<comment type="subcellular location">
    <subcellularLocation>
        <location>Membrane</location>
        <topology>Multi-pass membrane protein</topology>
    </subcellularLocation>
</comment>
<name>YOR76_YEAST</name>
<reference key="1">
    <citation type="journal article" date="1997" name="Nature">
        <title>The nucleotide sequence of Saccharomyces cerevisiae chromosome XV.</title>
        <authorList>
            <person name="Dujon B."/>
            <person name="Albermann K."/>
            <person name="Aldea M."/>
            <person name="Alexandraki D."/>
            <person name="Ansorge W."/>
            <person name="Arino J."/>
            <person name="Benes V."/>
            <person name="Bohn C."/>
            <person name="Bolotin-Fukuhara M."/>
            <person name="Bordonne R."/>
            <person name="Boyer J."/>
            <person name="Camasses A."/>
            <person name="Casamayor A."/>
            <person name="Casas C."/>
            <person name="Cheret G."/>
            <person name="Cziepluch C."/>
            <person name="Daignan-Fornier B."/>
            <person name="Dang V.-D."/>
            <person name="de Haan M."/>
            <person name="Delius H."/>
            <person name="Durand P."/>
            <person name="Fairhead C."/>
            <person name="Feldmann H."/>
            <person name="Gaillon L."/>
            <person name="Galisson F."/>
            <person name="Gamo F.-J."/>
            <person name="Gancedo C."/>
            <person name="Goffeau A."/>
            <person name="Goulding S.E."/>
            <person name="Grivell L.A."/>
            <person name="Habbig B."/>
            <person name="Hand N.J."/>
            <person name="Hani J."/>
            <person name="Hattenhorst U."/>
            <person name="Hebling U."/>
            <person name="Hernando Y."/>
            <person name="Herrero E."/>
            <person name="Heumann K."/>
            <person name="Hiesel R."/>
            <person name="Hilger F."/>
            <person name="Hofmann B."/>
            <person name="Hollenberg C.P."/>
            <person name="Hughes B."/>
            <person name="Jauniaux J.-C."/>
            <person name="Kalogeropoulos A."/>
            <person name="Katsoulou C."/>
            <person name="Kordes E."/>
            <person name="Lafuente M.J."/>
            <person name="Landt O."/>
            <person name="Louis E.J."/>
            <person name="Maarse A.C."/>
            <person name="Madania A."/>
            <person name="Mannhaupt G."/>
            <person name="Marck C."/>
            <person name="Martin R.P."/>
            <person name="Mewes H.-W."/>
            <person name="Michaux G."/>
            <person name="Paces V."/>
            <person name="Parle-McDermott A.G."/>
            <person name="Pearson B.M."/>
            <person name="Perrin A."/>
            <person name="Pettersson B."/>
            <person name="Poch O."/>
            <person name="Pohl T.M."/>
            <person name="Poirey R."/>
            <person name="Portetelle D."/>
            <person name="Pujol A."/>
            <person name="Purnelle B."/>
            <person name="Ramezani Rad M."/>
            <person name="Rechmann S."/>
            <person name="Schwager C."/>
            <person name="Schweizer M."/>
            <person name="Sor F."/>
            <person name="Sterky F."/>
            <person name="Tarassov I.A."/>
            <person name="Teodoru C."/>
            <person name="Tettelin H."/>
            <person name="Thierry A."/>
            <person name="Tobiasch E."/>
            <person name="Tzermia M."/>
            <person name="Uhlen M."/>
            <person name="Unseld M."/>
            <person name="Valens M."/>
            <person name="Vandenbol M."/>
            <person name="Vetter I."/>
            <person name="Vlcek C."/>
            <person name="Voet M."/>
            <person name="Volckaert G."/>
            <person name="Voss H."/>
            <person name="Wambutt R."/>
            <person name="Wedler H."/>
            <person name="Wiemann S."/>
            <person name="Winsor B."/>
            <person name="Wolfe K.H."/>
            <person name="Zollner A."/>
            <person name="Zumstein E."/>
            <person name="Kleine K."/>
        </authorList>
    </citation>
    <scope>NUCLEOTIDE SEQUENCE [LARGE SCALE GENOMIC DNA]</scope>
    <source>
        <strain>ATCC 204508 / S288c</strain>
    </source>
</reference>
<reference key="2">
    <citation type="journal article" date="2014" name="G3 (Bethesda)">
        <title>The reference genome sequence of Saccharomyces cerevisiae: Then and now.</title>
        <authorList>
            <person name="Engel S.R."/>
            <person name="Dietrich F.S."/>
            <person name="Fisk D.G."/>
            <person name="Binkley G."/>
            <person name="Balakrishnan R."/>
            <person name="Costanzo M.C."/>
            <person name="Dwight S.S."/>
            <person name="Hitz B.C."/>
            <person name="Karra K."/>
            <person name="Nash R.S."/>
            <person name="Weng S."/>
            <person name="Wong E.D."/>
            <person name="Lloyd P."/>
            <person name="Skrzypek M.S."/>
            <person name="Miyasato S.R."/>
            <person name="Simison M."/>
            <person name="Cherry J.M."/>
        </authorList>
    </citation>
    <scope>GENOME REANNOTATION</scope>
    <source>
        <strain>ATCC 204508 / S288c</strain>
    </source>
</reference>
<reference key="3">
    <citation type="journal article" date="2003" name="J. Biol. Chem.">
        <title>Topology models for 37 Saccharomyces cerevisiae membrane proteins based on C-terminal reporter fusions and predictions.</title>
        <authorList>
            <person name="Kim H."/>
            <person name="Melen K."/>
            <person name="von Heijne G."/>
        </authorList>
    </citation>
    <scope>TOPOLOGY</scope>
</reference>
<reference key="4">
    <citation type="journal article" date="2006" name="Proc. Natl. Acad. Sci. U.S.A.">
        <title>A global topology map of the Saccharomyces cerevisiae membrane proteome.</title>
        <authorList>
            <person name="Kim H."/>
            <person name="Melen K."/>
            <person name="Oesterberg M."/>
            <person name="von Heijne G."/>
        </authorList>
    </citation>
    <scope>TOPOLOGY [LARGE SCALE ANALYSIS]</scope>
    <source>
        <strain>ATCC 208353 / W303-1A</strain>
    </source>
</reference>
<gene>
    <name type="ordered locus">YOR376W</name>
    <name type="ORF">O6736</name>
</gene>
<organism>
    <name type="scientific">Saccharomyces cerevisiae (strain ATCC 204508 / S288c)</name>
    <name type="common">Baker's yeast</name>
    <dbReference type="NCBI Taxonomy" id="559292"/>
    <lineage>
        <taxon>Eukaryota</taxon>
        <taxon>Fungi</taxon>
        <taxon>Dikarya</taxon>
        <taxon>Ascomycota</taxon>
        <taxon>Saccharomycotina</taxon>
        <taxon>Saccharomycetes</taxon>
        <taxon>Saccharomycetales</taxon>
        <taxon>Saccharomycetaceae</taxon>
        <taxon>Saccharomyces</taxon>
    </lineage>
</organism>
<dbReference type="EMBL" id="Z75284">
    <property type="protein sequence ID" value="CAA99707.1"/>
    <property type="molecule type" value="Genomic_DNA"/>
</dbReference>
<dbReference type="EMBL" id="BK006948">
    <property type="protein sequence ID" value="DAA80340.1"/>
    <property type="molecule type" value="Genomic_DNA"/>
</dbReference>
<dbReference type="PIR" id="S67288">
    <property type="entry name" value="S67288"/>
</dbReference>
<dbReference type="RefSeq" id="NP_001335820.1">
    <property type="nucleotide sequence ID" value="NM_001348882.1"/>
</dbReference>
<dbReference type="FunCoup" id="Q08900">
    <property type="interactions" value="32"/>
</dbReference>
<dbReference type="STRING" id="4932.YOR376W"/>
<dbReference type="PaxDb" id="4932-YOR376W"/>
<dbReference type="EnsemblFungi" id="YOR376W_mRNA">
    <property type="protein sequence ID" value="YOR376W"/>
    <property type="gene ID" value="YOR376W"/>
</dbReference>
<dbReference type="GeneID" id="854558"/>
<dbReference type="AGR" id="SGD:S000005903"/>
<dbReference type="SGD" id="S000005903">
    <property type="gene designation" value="YOR376W"/>
</dbReference>
<dbReference type="HOGENOM" id="CLU_2028527_0_0_1"/>
<dbReference type="InParanoid" id="Q08900"/>
<dbReference type="OrthoDB" id="4041494at2759"/>
<dbReference type="PRO" id="PR:Q08900"/>
<dbReference type="Proteomes" id="UP000002311">
    <property type="component" value="Chromosome XV"/>
</dbReference>
<dbReference type="RNAct" id="Q08900">
    <property type="molecule type" value="protein"/>
</dbReference>
<dbReference type="GO" id="GO:0016020">
    <property type="term" value="C:membrane"/>
    <property type="evidence" value="ECO:0000255"/>
    <property type="project" value="SGD"/>
</dbReference>
<evidence type="ECO:0000255" key="1"/>
<evidence type="ECO:0000269" key="2">
    <source>
    </source>
</evidence>
<evidence type="ECO:0000269" key="3">
    <source>
    </source>
</evidence>
<evidence type="ECO:0000305" key="4">
    <source>
    </source>
</evidence>
<evidence type="ECO:0000305" key="5">
    <source>
    </source>
</evidence>
<sequence>MKNRKFSNLLLLRLRILCFNKKPAFAATSYAFFFRNFSVLIFIMVPDEKENGAAADNSFSLLIGRGVVLFLFYCPTALKMHGPVPAHWFCDKNIEAIQSDGQIRLLRSGPFPWSHGTCIRGA</sequence>
<protein>
    <recommendedName>
        <fullName>Uncharacterized membrane protein YOR376W</fullName>
    </recommendedName>
</protein>
<feature type="chain" id="PRO_0000262745" description="Uncharacterized membrane protein YOR376W">
    <location>
        <begin position="1"/>
        <end position="122"/>
    </location>
</feature>
<feature type="topological domain" description="Cytoplasmic" evidence="4 5">
    <location>
        <begin position="1"/>
        <end position="24"/>
    </location>
</feature>
<feature type="transmembrane region" description="Helical" evidence="1">
    <location>
        <begin position="25"/>
        <end position="45"/>
    </location>
</feature>
<feature type="topological domain" description="Extracellular" evidence="4 5">
    <location>
        <begin position="46"/>
        <end position="57"/>
    </location>
</feature>
<feature type="transmembrane region" description="Helical" evidence="1">
    <location>
        <begin position="58"/>
        <end position="78"/>
    </location>
</feature>
<feature type="topological domain" description="Cytoplasmic" evidence="2 3">
    <location>
        <begin position="79"/>
        <end position="122"/>
    </location>
</feature>
<keyword id="KW-0472">Membrane</keyword>
<keyword id="KW-1185">Reference proteome</keyword>
<keyword id="KW-0812">Transmembrane</keyword>
<keyword id="KW-1133">Transmembrane helix</keyword>
<proteinExistence type="evidence at protein level"/>